<comment type="function">
    <text evidence="2">Involved in base excision repair of DNA damaged by oxidation or by mutagenic agents. Acts as a DNA glycosylase that recognizes and removes damaged bases. Has a preference for oxidized purines, such as 7,8-dihydro-8-oxoguanine (8-oxoG). Has AP (apurinic/apyrimidinic) lyase activity and introduces nicks in the DNA strand. Cleaves the DNA backbone by beta-delta elimination to generate a single-strand break at the site of the removed base with both 3'- and 5'-phosphates.</text>
</comment>
<comment type="catalytic activity">
    <reaction evidence="2">
        <text>Hydrolysis of DNA containing ring-opened 7-methylguanine residues, releasing 2,6-diamino-4-hydroxy-5-(N-methyl)formamidopyrimidine.</text>
        <dbReference type="EC" id="3.2.2.23"/>
    </reaction>
</comment>
<comment type="catalytic activity">
    <reaction evidence="2">
        <text>2'-deoxyribonucleotide-(2'-deoxyribose 5'-phosphate)-2'-deoxyribonucleotide-DNA = a 3'-end 2'-deoxyribonucleotide-(2,3-dehydro-2,3-deoxyribose 5'-phosphate)-DNA + a 5'-end 5'-phospho-2'-deoxyribonucleoside-DNA + H(+)</text>
        <dbReference type="Rhea" id="RHEA:66592"/>
        <dbReference type="Rhea" id="RHEA-COMP:13180"/>
        <dbReference type="Rhea" id="RHEA-COMP:16897"/>
        <dbReference type="Rhea" id="RHEA-COMP:17067"/>
        <dbReference type="ChEBI" id="CHEBI:15378"/>
        <dbReference type="ChEBI" id="CHEBI:136412"/>
        <dbReference type="ChEBI" id="CHEBI:157695"/>
        <dbReference type="ChEBI" id="CHEBI:167181"/>
        <dbReference type="EC" id="4.2.99.18"/>
    </reaction>
</comment>
<comment type="cofactor">
    <cofactor evidence="2">
        <name>Zn(2+)</name>
        <dbReference type="ChEBI" id="CHEBI:29105"/>
    </cofactor>
    <text evidence="2">Binds 1 zinc ion per subunit.</text>
</comment>
<comment type="subunit">
    <text evidence="2">Monomer.</text>
</comment>
<comment type="similarity">
    <text evidence="2">Belongs to the FPG family.</text>
</comment>
<name>FPG_ECO27</name>
<accession>B7ULJ0</accession>
<keyword id="KW-0227">DNA damage</keyword>
<keyword id="KW-0234">DNA repair</keyword>
<keyword id="KW-0238">DNA-binding</keyword>
<keyword id="KW-0326">Glycosidase</keyword>
<keyword id="KW-0378">Hydrolase</keyword>
<keyword id="KW-0456">Lyase</keyword>
<keyword id="KW-0479">Metal-binding</keyword>
<keyword id="KW-0511">Multifunctional enzyme</keyword>
<keyword id="KW-1185">Reference proteome</keyword>
<keyword id="KW-0862">Zinc</keyword>
<keyword id="KW-0863">Zinc-finger</keyword>
<reference key="1">
    <citation type="journal article" date="2009" name="J. Bacteriol.">
        <title>Complete genome sequence and comparative genome analysis of enteropathogenic Escherichia coli O127:H6 strain E2348/69.</title>
        <authorList>
            <person name="Iguchi A."/>
            <person name="Thomson N.R."/>
            <person name="Ogura Y."/>
            <person name="Saunders D."/>
            <person name="Ooka T."/>
            <person name="Henderson I.R."/>
            <person name="Harris D."/>
            <person name="Asadulghani M."/>
            <person name="Kurokawa K."/>
            <person name="Dean P."/>
            <person name="Kenny B."/>
            <person name="Quail M.A."/>
            <person name="Thurston S."/>
            <person name="Dougan G."/>
            <person name="Hayashi T."/>
            <person name="Parkhill J."/>
            <person name="Frankel G."/>
        </authorList>
    </citation>
    <scope>NUCLEOTIDE SEQUENCE [LARGE SCALE GENOMIC DNA]</scope>
    <source>
        <strain>E2348/69 / EPEC</strain>
    </source>
</reference>
<gene>
    <name evidence="2" type="primary">mutM</name>
    <name evidence="2" type="synonym">fpg</name>
    <name type="ordered locus">E2348C_3883</name>
</gene>
<dbReference type="EC" id="3.2.2.23" evidence="2"/>
<dbReference type="EC" id="4.2.99.18" evidence="2"/>
<dbReference type="EMBL" id="FM180568">
    <property type="protein sequence ID" value="CAS11431.1"/>
    <property type="molecule type" value="Genomic_DNA"/>
</dbReference>
<dbReference type="RefSeq" id="WP_001114533.1">
    <property type="nucleotide sequence ID" value="NC_011601.1"/>
</dbReference>
<dbReference type="SMR" id="B7ULJ0"/>
<dbReference type="GeneID" id="93778348"/>
<dbReference type="KEGG" id="ecg:E2348C_3883"/>
<dbReference type="HOGENOM" id="CLU_038423_1_1_6"/>
<dbReference type="Proteomes" id="UP000008205">
    <property type="component" value="Chromosome"/>
</dbReference>
<dbReference type="GO" id="GO:0034039">
    <property type="term" value="F:8-oxo-7,8-dihydroguanine DNA N-glycosylase activity"/>
    <property type="evidence" value="ECO:0007669"/>
    <property type="project" value="TreeGrafter"/>
</dbReference>
<dbReference type="GO" id="GO:0140078">
    <property type="term" value="F:class I DNA-(apurinic or apyrimidinic site) endonuclease activity"/>
    <property type="evidence" value="ECO:0007669"/>
    <property type="project" value="UniProtKB-EC"/>
</dbReference>
<dbReference type="GO" id="GO:0003684">
    <property type="term" value="F:damaged DNA binding"/>
    <property type="evidence" value="ECO:0007669"/>
    <property type="project" value="InterPro"/>
</dbReference>
<dbReference type="GO" id="GO:0008270">
    <property type="term" value="F:zinc ion binding"/>
    <property type="evidence" value="ECO:0007669"/>
    <property type="project" value="UniProtKB-UniRule"/>
</dbReference>
<dbReference type="GO" id="GO:0006284">
    <property type="term" value="P:base-excision repair"/>
    <property type="evidence" value="ECO:0007669"/>
    <property type="project" value="InterPro"/>
</dbReference>
<dbReference type="CDD" id="cd08966">
    <property type="entry name" value="EcFpg-like_N"/>
    <property type="match status" value="1"/>
</dbReference>
<dbReference type="FunFam" id="1.10.8.50:FF:000003">
    <property type="entry name" value="Formamidopyrimidine-DNA glycosylase"/>
    <property type="match status" value="1"/>
</dbReference>
<dbReference type="FunFam" id="3.20.190.10:FF:000001">
    <property type="entry name" value="Formamidopyrimidine-DNA glycosylase"/>
    <property type="match status" value="1"/>
</dbReference>
<dbReference type="Gene3D" id="1.10.8.50">
    <property type="match status" value="1"/>
</dbReference>
<dbReference type="Gene3D" id="3.20.190.10">
    <property type="entry name" value="MutM-like, N-terminal"/>
    <property type="match status" value="1"/>
</dbReference>
<dbReference type="HAMAP" id="MF_00103">
    <property type="entry name" value="Fapy_DNA_glycosyl"/>
    <property type="match status" value="1"/>
</dbReference>
<dbReference type="InterPro" id="IPR015886">
    <property type="entry name" value="DNA_glyclase/AP_lyase_DNA-bd"/>
</dbReference>
<dbReference type="InterPro" id="IPR015887">
    <property type="entry name" value="DNA_glyclase_Znf_dom_DNA_BS"/>
</dbReference>
<dbReference type="InterPro" id="IPR020629">
    <property type="entry name" value="Formamido-pyr_DNA_Glyclase"/>
</dbReference>
<dbReference type="InterPro" id="IPR012319">
    <property type="entry name" value="FPG_cat"/>
</dbReference>
<dbReference type="InterPro" id="IPR035937">
    <property type="entry name" value="MutM-like_N-ter"/>
</dbReference>
<dbReference type="InterPro" id="IPR010979">
    <property type="entry name" value="Ribosomal_uS13-like_H2TH"/>
</dbReference>
<dbReference type="InterPro" id="IPR000214">
    <property type="entry name" value="Znf_DNA_glyclase/AP_lyase"/>
</dbReference>
<dbReference type="InterPro" id="IPR010663">
    <property type="entry name" value="Znf_FPG/IleRS"/>
</dbReference>
<dbReference type="NCBIfam" id="TIGR00577">
    <property type="entry name" value="fpg"/>
    <property type="match status" value="1"/>
</dbReference>
<dbReference type="NCBIfam" id="NF002211">
    <property type="entry name" value="PRK01103.1"/>
    <property type="match status" value="1"/>
</dbReference>
<dbReference type="PANTHER" id="PTHR22993">
    <property type="entry name" value="FORMAMIDOPYRIMIDINE-DNA GLYCOSYLASE"/>
    <property type="match status" value="1"/>
</dbReference>
<dbReference type="PANTHER" id="PTHR22993:SF9">
    <property type="entry name" value="FORMAMIDOPYRIMIDINE-DNA GLYCOSYLASE"/>
    <property type="match status" value="1"/>
</dbReference>
<dbReference type="Pfam" id="PF01149">
    <property type="entry name" value="Fapy_DNA_glyco"/>
    <property type="match status" value="1"/>
</dbReference>
<dbReference type="Pfam" id="PF06831">
    <property type="entry name" value="H2TH"/>
    <property type="match status" value="1"/>
</dbReference>
<dbReference type="Pfam" id="PF06827">
    <property type="entry name" value="zf-FPG_IleRS"/>
    <property type="match status" value="1"/>
</dbReference>
<dbReference type="SMART" id="SM00898">
    <property type="entry name" value="Fapy_DNA_glyco"/>
    <property type="match status" value="1"/>
</dbReference>
<dbReference type="SMART" id="SM01232">
    <property type="entry name" value="H2TH"/>
    <property type="match status" value="1"/>
</dbReference>
<dbReference type="SUPFAM" id="SSF57716">
    <property type="entry name" value="Glucocorticoid receptor-like (DNA-binding domain)"/>
    <property type="match status" value="1"/>
</dbReference>
<dbReference type="SUPFAM" id="SSF81624">
    <property type="entry name" value="N-terminal domain of MutM-like DNA repair proteins"/>
    <property type="match status" value="1"/>
</dbReference>
<dbReference type="SUPFAM" id="SSF46946">
    <property type="entry name" value="S13-like H2TH domain"/>
    <property type="match status" value="1"/>
</dbReference>
<dbReference type="PROSITE" id="PS51068">
    <property type="entry name" value="FPG_CAT"/>
    <property type="match status" value="1"/>
</dbReference>
<dbReference type="PROSITE" id="PS01242">
    <property type="entry name" value="ZF_FPG_1"/>
    <property type="match status" value="1"/>
</dbReference>
<dbReference type="PROSITE" id="PS51066">
    <property type="entry name" value="ZF_FPG_2"/>
    <property type="match status" value="1"/>
</dbReference>
<feature type="initiator methionine" description="Removed" evidence="1">
    <location>
        <position position="1"/>
    </location>
</feature>
<feature type="chain" id="PRO_1000118887" description="Formamidopyrimidine-DNA glycosylase">
    <location>
        <begin position="2"/>
        <end position="269"/>
    </location>
</feature>
<feature type="zinc finger region" description="FPG-type" evidence="2">
    <location>
        <begin position="235"/>
        <end position="269"/>
    </location>
</feature>
<feature type="active site" description="Schiff-base intermediate with DNA" evidence="2">
    <location>
        <position position="2"/>
    </location>
</feature>
<feature type="active site" description="Proton donor" evidence="2">
    <location>
        <position position="3"/>
    </location>
</feature>
<feature type="active site" description="Proton donor; for beta-elimination activity" evidence="2">
    <location>
        <position position="57"/>
    </location>
</feature>
<feature type="active site" description="Proton donor; for delta-elimination activity" evidence="2">
    <location>
        <position position="259"/>
    </location>
</feature>
<feature type="binding site" evidence="2">
    <location>
        <position position="90"/>
    </location>
    <ligand>
        <name>DNA</name>
        <dbReference type="ChEBI" id="CHEBI:16991"/>
    </ligand>
</feature>
<feature type="binding site" evidence="2">
    <location>
        <position position="109"/>
    </location>
    <ligand>
        <name>DNA</name>
        <dbReference type="ChEBI" id="CHEBI:16991"/>
    </ligand>
</feature>
<feature type="binding site" evidence="2">
    <location>
        <position position="150"/>
    </location>
    <ligand>
        <name>DNA</name>
        <dbReference type="ChEBI" id="CHEBI:16991"/>
    </ligand>
</feature>
<sequence length="269" mass="30260">MPELPEVETSRRGIEPHLVGATILHAVVRNGRLRWPVSEEIYRLSDQPVLSVQRRAKYLLLELPEGWIIIHLGMSGSLRILPEELPPEKHDHVDLVMSNGKVLRYTDPRRFGAWLWTKELEGHNVLAHLGPEPLSDDFNGEYLHQKCAKKKTAIKPWLMDNKLVVGVGNIYASESLFAAGIHPDRLASSLSLAECELLARVIKAVLLRSIEQGGTTLKDFLQSDGKPGYFAQELQVYGRKGEPCRVCGTPIVATKHAQRATFYCRQCQK</sequence>
<protein>
    <recommendedName>
        <fullName evidence="2">Formamidopyrimidine-DNA glycosylase</fullName>
        <shortName evidence="2">Fapy-DNA glycosylase</shortName>
        <ecNumber evidence="2">3.2.2.23</ecNumber>
    </recommendedName>
    <alternativeName>
        <fullName evidence="2">DNA-(apurinic or apyrimidinic site) lyase MutM</fullName>
        <shortName evidence="2">AP lyase MutM</shortName>
        <ecNumber evidence="2">4.2.99.18</ecNumber>
    </alternativeName>
</protein>
<proteinExistence type="inferred from homology"/>
<organism>
    <name type="scientific">Escherichia coli O127:H6 (strain E2348/69 / EPEC)</name>
    <dbReference type="NCBI Taxonomy" id="574521"/>
    <lineage>
        <taxon>Bacteria</taxon>
        <taxon>Pseudomonadati</taxon>
        <taxon>Pseudomonadota</taxon>
        <taxon>Gammaproteobacteria</taxon>
        <taxon>Enterobacterales</taxon>
        <taxon>Enterobacteriaceae</taxon>
        <taxon>Escherichia</taxon>
    </lineage>
</organism>
<evidence type="ECO:0000250" key="1"/>
<evidence type="ECO:0000255" key="2">
    <source>
        <dbReference type="HAMAP-Rule" id="MF_00103"/>
    </source>
</evidence>